<sequence>MKEGIHPDYHEITAKCSCGHVFVTRSTGKDLNLDVCSECHPFYTGKQKVLDTGGRIDRFKKRFAVLGGKN</sequence>
<protein>
    <recommendedName>
        <fullName evidence="1">Large ribosomal subunit protein bL31</fullName>
    </recommendedName>
    <alternativeName>
        <fullName evidence="2">50S ribosomal protein L31</fullName>
    </alternativeName>
</protein>
<evidence type="ECO:0000255" key="1">
    <source>
        <dbReference type="HAMAP-Rule" id="MF_00501"/>
    </source>
</evidence>
<evidence type="ECO:0000305" key="2"/>
<accession>C4L9Y1</accession>
<dbReference type="EMBL" id="CP001616">
    <property type="protein sequence ID" value="ACQ92110.1"/>
    <property type="molecule type" value="Genomic_DNA"/>
</dbReference>
<dbReference type="RefSeq" id="WP_012728709.1">
    <property type="nucleotide sequence ID" value="NC_012691.1"/>
</dbReference>
<dbReference type="SMR" id="C4L9Y1"/>
<dbReference type="STRING" id="595494.Tola_0481"/>
<dbReference type="KEGG" id="tau:Tola_0481"/>
<dbReference type="eggNOG" id="COG0254">
    <property type="taxonomic scope" value="Bacteria"/>
</dbReference>
<dbReference type="HOGENOM" id="CLU_114306_4_3_6"/>
<dbReference type="OrthoDB" id="9803251at2"/>
<dbReference type="Proteomes" id="UP000009073">
    <property type="component" value="Chromosome"/>
</dbReference>
<dbReference type="GO" id="GO:1990904">
    <property type="term" value="C:ribonucleoprotein complex"/>
    <property type="evidence" value="ECO:0007669"/>
    <property type="project" value="UniProtKB-KW"/>
</dbReference>
<dbReference type="GO" id="GO:0005840">
    <property type="term" value="C:ribosome"/>
    <property type="evidence" value="ECO:0007669"/>
    <property type="project" value="UniProtKB-KW"/>
</dbReference>
<dbReference type="GO" id="GO:0046872">
    <property type="term" value="F:metal ion binding"/>
    <property type="evidence" value="ECO:0007669"/>
    <property type="project" value="UniProtKB-KW"/>
</dbReference>
<dbReference type="GO" id="GO:0019843">
    <property type="term" value="F:rRNA binding"/>
    <property type="evidence" value="ECO:0007669"/>
    <property type="project" value="UniProtKB-KW"/>
</dbReference>
<dbReference type="GO" id="GO:0003735">
    <property type="term" value="F:structural constituent of ribosome"/>
    <property type="evidence" value="ECO:0007669"/>
    <property type="project" value="InterPro"/>
</dbReference>
<dbReference type="GO" id="GO:0006412">
    <property type="term" value="P:translation"/>
    <property type="evidence" value="ECO:0007669"/>
    <property type="project" value="UniProtKB-UniRule"/>
</dbReference>
<dbReference type="Gene3D" id="4.10.830.30">
    <property type="entry name" value="Ribosomal protein L31"/>
    <property type="match status" value="1"/>
</dbReference>
<dbReference type="HAMAP" id="MF_00501">
    <property type="entry name" value="Ribosomal_bL31_1"/>
    <property type="match status" value="1"/>
</dbReference>
<dbReference type="InterPro" id="IPR034704">
    <property type="entry name" value="Ribosomal_bL28/bL31-like_sf"/>
</dbReference>
<dbReference type="InterPro" id="IPR002150">
    <property type="entry name" value="Ribosomal_bL31"/>
</dbReference>
<dbReference type="InterPro" id="IPR027491">
    <property type="entry name" value="Ribosomal_bL31_A"/>
</dbReference>
<dbReference type="InterPro" id="IPR042105">
    <property type="entry name" value="Ribosomal_bL31_sf"/>
</dbReference>
<dbReference type="NCBIfam" id="TIGR00105">
    <property type="entry name" value="L31"/>
    <property type="match status" value="1"/>
</dbReference>
<dbReference type="NCBIfam" id="NF000612">
    <property type="entry name" value="PRK00019.1"/>
    <property type="match status" value="1"/>
</dbReference>
<dbReference type="NCBIfam" id="NF001809">
    <property type="entry name" value="PRK00528.1"/>
    <property type="match status" value="1"/>
</dbReference>
<dbReference type="PANTHER" id="PTHR33280">
    <property type="entry name" value="50S RIBOSOMAL PROTEIN L31, CHLOROPLASTIC"/>
    <property type="match status" value="1"/>
</dbReference>
<dbReference type="PANTHER" id="PTHR33280:SF6">
    <property type="entry name" value="LARGE RIBOSOMAL SUBUNIT PROTEIN BL31A"/>
    <property type="match status" value="1"/>
</dbReference>
<dbReference type="Pfam" id="PF01197">
    <property type="entry name" value="Ribosomal_L31"/>
    <property type="match status" value="1"/>
</dbReference>
<dbReference type="PRINTS" id="PR01249">
    <property type="entry name" value="RIBOSOMALL31"/>
</dbReference>
<dbReference type="SUPFAM" id="SSF143800">
    <property type="entry name" value="L28p-like"/>
    <property type="match status" value="1"/>
</dbReference>
<dbReference type="PROSITE" id="PS01143">
    <property type="entry name" value="RIBOSOMAL_L31"/>
    <property type="match status" value="1"/>
</dbReference>
<gene>
    <name evidence="1" type="primary">rpmE</name>
    <name type="ordered locus">Tola_0481</name>
</gene>
<feature type="chain" id="PRO_1000206529" description="Large ribosomal subunit protein bL31">
    <location>
        <begin position="1"/>
        <end position="70"/>
    </location>
</feature>
<feature type="binding site" evidence="1">
    <location>
        <position position="16"/>
    </location>
    <ligand>
        <name>Zn(2+)</name>
        <dbReference type="ChEBI" id="CHEBI:29105"/>
    </ligand>
</feature>
<feature type="binding site" evidence="1">
    <location>
        <position position="18"/>
    </location>
    <ligand>
        <name>Zn(2+)</name>
        <dbReference type="ChEBI" id="CHEBI:29105"/>
    </ligand>
</feature>
<feature type="binding site" evidence="1">
    <location>
        <position position="36"/>
    </location>
    <ligand>
        <name>Zn(2+)</name>
        <dbReference type="ChEBI" id="CHEBI:29105"/>
    </ligand>
</feature>
<feature type="binding site" evidence="1">
    <location>
        <position position="39"/>
    </location>
    <ligand>
        <name>Zn(2+)</name>
        <dbReference type="ChEBI" id="CHEBI:29105"/>
    </ligand>
</feature>
<organism>
    <name type="scientific">Tolumonas auensis (strain DSM 9187 / NBRC 110442 / TA 4)</name>
    <dbReference type="NCBI Taxonomy" id="595494"/>
    <lineage>
        <taxon>Bacteria</taxon>
        <taxon>Pseudomonadati</taxon>
        <taxon>Pseudomonadota</taxon>
        <taxon>Gammaproteobacteria</taxon>
        <taxon>Aeromonadales</taxon>
        <taxon>Aeromonadaceae</taxon>
        <taxon>Tolumonas</taxon>
    </lineage>
</organism>
<comment type="function">
    <text evidence="1">Binds the 23S rRNA.</text>
</comment>
<comment type="cofactor">
    <cofactor evidence="1">
        <name>Zn(2+)</name>
        <dbReference type="ChEBI" id="CHEBI:29105"/>
    </cofactor>
    <text evidence="1">Binds 1 zinc ion per subunit.</text>
</comment>
<comment type="subunit">
    <text evidence="1">Part of the 50S ribosomal subunit.</text>
</comment>
<comment type="similarity">
    <text evidence="1">Belongs to the bacterial ribosomal protein bL31 family. Type A subfamily.</text>
</comment>
<keyword id="KW-0479">Metal-binding</keyword>
<keyword id="KW-1185">Reference proteome</keyword>
<keyword id="KW-0687">Ribonucleoprotein</keyword>
<keyword id="KW-0689">Ribosomal protein</keyword>
<keyword id="KW-0694">RNA-binding</keyword>
<keyword id="KW-0699">rRNA-binding</keyword>
<keyword id="KW-0862">Zinc</keyword>
<reference key="1">
    <citation type="submission" date="2009-05" db="EMBL/GenBank/DDBJ databases">
        <title>Complete sequence of Tolumonas auensis DSM 9187.</title>
        <authorList>
            <consortium name="US DOE Joint Genome Institute"/>
            <person name="Lucas S."/>
            <person name="Copeland A."/>
            <person name="Lapidus A."/>
            <person name="Glavina del Rio T."/>
            <person name="Tice H."/>
            <person name="Bruce D."/>
            <person name="Goodwin L."/>
            <person name="Pitluck S."/>
            <person name="Chertkov O."/>
            <person name="Brettin T."/>
            <person name="Detter J.C."/>
            <person name="Han C."/>
            <person name="Larimer F."/>
            <person name="Land M."/>
            <person name="Hauser L."/>
            <person name="Kyrpides N."/>
            <person name="Mikhailova N."/>
            <person name="Spring S."/>
            <person name="Beller H."/>
        </authorList>
    </citation>
    <scope>NUCLEOTIDE SEQUENCE [LARGE SCALE GENOMIC DNA]</scope>
    <source>
        <strain>DSM 9187 / NBRC 110442 / TA 4</strain>
    </source>
</reference>
<proteinExistence type="inferred from homology"/>
<name>RL31_TOLAT</name>